<reference key="1">
    <citation type="journal article" date="2008" name="Genome Res.">
        <title>Chlamydia trachomatis: genome sequence analysis of lymphogranuloma venereum isolates.</title>
        <authorList>
            <person name="Thomson N.R."/>
            <person name="Holden M.T.G."/>
            <person name="Carder C."/>
            <person name="Lennard N."/>
            <person name="Lockey S.J."/>
            <person name="Marsh P."/>
            <person name="Skipp P."/>
            <person name="O'Connor C.D."/>
            <person name="Goodhead I."/>
            <person name="Norbertzcak H."/>
            <person name="Harris B."/>
            <person name="Ormond D."/>
            <person name="Rance R."/>
            <person name="Quail M.A."/>
            <person name="Parkhill J."/>
            <person name="Stephens R.S."/>
            <person name="Clarke I.N."/>
        </authorList>
    </citation>
    <scope>NUCLEOTIDE SEQUENCE [LARGE SCALE GENOMIC DNA]</scope>
    <source>
        <strain>ATCC VR-902B / DSM 19102 / 434/Bu</strain>
    </source>
</reference>
<comment type="function">
    <text evidence="1">Peptide chain release factor 1 directs the termination of translation in response to the peptide chain termination codons UAG and UAA.</text>
</comment>
<comment type="subcellular location">
    <subcellularLocation>
        <location evidence="1">Cytoplasm</location>
    </subcellularLocation>
</comment>
<comment type="PTM">
    <text evidence="1">Methylated by PrmC. Methylation increases the termination efficiency of RF1.</text>
</comment>
<comment type="similarity">
    <text evidence="1">Belongs to the prokaryotic/mitochondrial release factor family.</text>
</comment>
<proteinExistence type="inferred from homology"/>
<protein>
    <recommendedName>
        <fullName evidence="1">Peptide chain release factor 1</fullName>
        <shortName evidence="1">RF-1</shortName>
    </recommendedName>
</protein>
<organism>
    <name type="scientific">Chlamydia trachomatis serovar L2 (strain ATCC VR-902B / DSM 19102 / 434/Bu)</name>
    <dbReference type="NCBI Taxonomy" id="471472"/>
    <lineage>
        <taxon>Bacteria</taxon>
        <taxon>Pseudomonadati</taxon>
        <taxon>Chlamydiota</taxon>
        <taxon>Chlamydiia</taxon>
        <taxon>Chlamydiales</taxon>
        <taxon>Chlamydiaceae</taxon>
        <taxon>Chlamydia/Chlamydophila group</taxon>
        <taxon>Chlamydia</taxon>
    </lineage>
</organism>
<dbReference type="EMBL" id="AM884176">
    <property type="protein sequence ID" value="CAP03717.1"/>
    <property type="molecule type" value="Genomic_DNA"/>
</dbReference>
<dbReference type="RefSeq" id="WP_009873501.1">
    <property type="nucleotide sequence ID" value="NC_010287.1"/>
</dbReference>
<dbReference type="RefSeq" id="YP_001654362.1">
    <property type="nucleotide sequence ID" value="NC_010287.1"/>
</dbReference>
<dbReference type="SMR" id="B0B9D0"/>
<dbReference type="KEGG" id="ctb:CTL0278"/>
<dbReference type="PATRIC" id="fig|471472.4.peg.302"/>
<dbReference type="HOGENOM" id="CLU_036856_0_1_0"/>
<dbReference type="Proteomes" id="UP001154402">
    <property type="component" value="Chromosome"/>
</dbReference>
<dbReference type="GO" id="GO:0005737">
    <property type="term" value="C:cytoplasm"/>
    <property type="evidence" value="ECO:0007669"/>
    <property type="project" value="UniProtKB-SubCell"/>
</dbReference>
<dbReference type="GO" id="GO:0016149">
    <property type="term" value="F:translation release factor activity, codon specific"/>
    <property type="evidence" value="ECO:0007669"/>
    <property type="project" value="UniProtKB-UniRule"/>
</dbReference>
<dbReference type="FunFam" id="3.30.160.20:FF:000004">
    <property type="entry name" value="Peptide chain release factor 1"/>
    <property type="match status" value="1"/>
</dbReference>
<dbReference type="FunFam" id="3.30.70.1660:FF:000002">
    <property type="entry name" value="Peptide chain release factor 1"/>
    <property type="match status" value="1"/>
</dbReference>
<dbReference type="FunFam" id="3.30.70.1660:FF:000004">
    <property type="entry name" value="Peptide chain release factor 1"/>
    <property type="match status" value="1"/>
</dbReference>
<dbReference type="Gene3D" id="3.30.160.20">
    <property type="match status" value="1"/>
</dbReference>
<dbReference type="Gene3D" id="3.30.70.1660">
    <property type="match status" value="1"/>
</dbReference>
<dbReference type="Gene3D" id="6.10.140.1950">
    <property type="match status" value="1"/>
</dbReference>
<dbReference type="HAMAP" id="MF_00093">
    <property type="entry name" value="Rel_fac_1"/>
    <property type="match status" value="1"/>
</dbReference>
<dbReference type="InterPro" id="IPR005139">
    <property type="entry name" value="PCRF"/>
</dbReference>
<dbReference type="InterPro" id="IPR000352">
    <property type="entry name" value="Pep_chain_release_fac_I"/>
</dbReference>
<dbReference type="InterPro" id="IPR045853">
    <property type="entry name" value="Pep_chain_release_fac_I_sf"/>
</dbReference>
<dbReference type="InterPro" id="IPR050057">
    <property type="entry name" value="Prokaryotic/Mito_RF"/>
</dbReference>
<dbReference type="InterPro" id="IPR004373">
    <property type="entry name" value="RF-1"/>
</dbReference>
<dbReference type="NCBIfam" id="TIGR00019">
    <property type="entry name" value="prfA"/>
    <property type="match status" value="1"/>
</dbReference>
<dbReference type="NCBIfam" id="NF001859">
    <property type="entry name" value="PRK00591.1"/>
    <property type="match status" value="1"/>
</dbReference>
<dbReference type="PANTHER" id="PTHR43804">
    <property type="entry name" value="LD18447P"/>
    <property type="match status" value="1"/>
</dbReference>
<dbReference type="PANTHER" id="PTHR43804:SF7">
    <property type="entry name" value="LD18447P"/>
    <property type="match status" value="1"/>
</dbReference>
<dbReference type="Pfam" id="PF03462">
    <property type="entry name" value="PCRF"/>
    <property type="match status" value="1"/>
</dbReference>
<dbReference type="Pfam" id="PF00472">
    <property type="entry name" value="RF-1"/>
    <property type="match status" value="1"/>
</dbReference>
<dbReference type="SMART" id="SM00937">
    <property type="entry name" value="PCRF"/>
    <property type="match status" value="1"/>
</dbReference>
<dbReference type="SUPFAM" id="SSF75620">
    <property type="entry name" value="Release factor"/>
    <property type="match status" value="1"/>
</dbReference>
<dbReference type="PROSITE" id="PS00745">
    <property type="entry name" value="RF_PROK_I"/>
    <property type="match status" value="1"/>
</dbReference>
<accession>B0B9D0</accession>
<sequence length="359" mass="40022">MEIKVLECLKRLEEVEKQISDPNIFSNPKEYSSLSKEHARLSEIKNAHESLVATKKILQDDKLALSTEKDPEIVAMLEEGVLVGEEAVERLSKQLENLLIPPDPDDDLSVIMELRAGTGGDEAALFVGDCVRMYHLYAASKGWQCEVLSASESDLGGYKEYVMGISGASVKRFLQYEAGTHRVQRVPETETQGRVHTSAVTVAVLPEPAEDDEEVFIDEKDLRIDTFRSSGAGGQHVNVTDSAVRITHIPSGVVVTCQDERSQHKNKAKAMRVLKARIRDAEVQKRAQEASAMRSAQVGSGDRSERIRTYNFPQNRVTDHRIGLTLYNLDRVMEGELDMITTALVTHVHRQLFGHEETA</sequence>
<gene>
    <name evidence="1" type="primary">prfA</name>
    <name type="ordered locus">CTL0278</name>
</gene>
<feature type="chain" id="PRO_1000093438" description="Peptide chain release factor 1">
    <location>
        <begin position="1"/>
        <end position="359"/>
    </location>
</feature>
<feature type="region of interest" description="Disordered" evidence="2">
    <location>
        <begin position="287"/>
        <end position="312"/>
    </location>
</feature>
<feature type="modified residue" description="N5-methylglutamine" evidence="1">
    <location>
        <position position="235"/>
    </location>
</feature>
<evidence type="ECO:0000255" key="1">
    <source>
        <dbReference type="HAMAP-Rule" id="MF_00093"/>
    </source>
</evidence>
<evidence type="ECO:0000256" key="2">
    <source>
        <dbReference type="SAM" id="MobiDB-lite"/>
    </source>
</evidence>
<keyword id="KW-0963">Cytoplasm</keyword>
<keyword id="KW-0488">Methylation</keyword>
<keyword id="KW-0648">Protein biosynthesis</keyword>
<name>RF1_CHLT2</name>